<dbReference type="EMBL" id="M11084">
    <property type="protein sequence ID" value="AAA30017.1"/>
    <property type="molecule type" value="mRNA"/>
</dbReference>
<dbReference type="SMR" id="P04735"/>
<dbReference type="GO" id="GO:0000786">
    <property type="term" value="C:nucleosome"/>
    <property type="evidence" value="ECO:0007669"/>
    <property type="project" value="UniProtKB-KW"/>
</dbReference>
<dbReference type="GO" id="GO:0005634">
    <property type="term" value="C:nucleus"/>
    <property type="evidence" value="ECO:0007669"/>
    <property type="project" value="UniProtKB-SubCell"/>
</dbReference>
<dbReference type="GO" id="GO:0003677">
    <property type="term" value="F:DNA binding"/>
    <property type="evidence" value="ECO:0007669"/>
    <property type="project" value="UniProtKB-KW"/>
</dbReference>
<dbReference type="GO" id="GO:0046982">
    <property type="term" value="F:protein heterodimerization activity"/>
    <property type="evidence" value="ECO:0007669"/>
    <property type="project" value="InterPro"/>
</dbReference>
<dbReference type="GO" id="GO:0030527">
    <property type="term" value="F:structural constituent of chromatin"/>
    <property type="evidence" value="ECO:0007669"/>
    <property type="project" value="InterPro"/>
</dbReference>
<dbReference type="CDD" id="cd00074">
    <property type="entry name" value="HFD_H2A"/>
    <property type="match status" value="1"/>
</dbReference>
<dbReference type="FunFam" id="1.10.20.10:FF:000022">
    <property type="entry name" value="Histone H2A"/>
    <property type="match status" value="1"/>
</dbReference>
<dbReference type="Gene3D" id="1.10.20.10">
    <property type="entry name" value="Histone, subunit A"/>
    <property type="match status" value="1"/>
</dbReference>
<dbReference type="InterPro" id="IPR009072">
    <property type="entry name" value="Histone-fold"/>
</dbReference>
<dbReference type="InterPro" id="IPR002119">
    <property type="entry name" value="Histone_H2A"/>
</dbReference>
<dbReference type="InterPro" id="IPR007125">
    <property type="entry name" value="Histone_H2A/H2B/H3"/>
</dbReference>
<dbReference type="InterPro" id="IPR032454">
    <property type="entry name" value="Histone_H2A_C"/>
</dbReference>
<dbReference type="InterPro" id="IPR032458">
    <property type="entry name" value="Histone_H2A_CS"/>
</dbReference>
<dbReference type="PANTHER" id="PTHR23430">
    <property type="entry name" value="HISTONE H2A"/>
    <property type="match status" value="1"/>
</dbReference>
<dbReference type="Pfam" id="PF00125">
    <property type="entry name" value="Histone"/>
    <property type="match status" value="1"/>
</dbReference>
<dbReference type="Pfam" id="PF16211">
    <property type="entry name" value="Histone_H2A_C"/>
    <property type="match status" value="1"/>
</dbReference>
<dbReference type="PRINTS" id="PR00620">
    <property type="entry name" value="HISTONEH2A"/>
</dbReference>
<dbReference type="SMART" id="SM00414">
    <property type="entry name" value="H2A"/>
    <property type="match status" value="1"/>
</dbReference>
<dbReference type="SUPFAM" id="SSF47113">
    <property type="entry name" value="Histone-fold"/>
    <property type="match status" value="1"/>
</dbReference>
<dbReference type="PROSITE" id="PS00046">
    <property type="entry name" value="HISTONE_H2A"/>
    <property type="match status" value="1"/>
</dbReference>
<sequence>MSGRGKGKAKGTKSKTRSSRAGLQFPVGRVHRFLKKGNYGSRVGAGAPVYLAAVLEYLTAEILELAGNAARDNKKSRIIPRHLQLAVRNDEELNKLLGGVTIAQGGVLPNIQAVLLPKKTAKASK</sequence>
<proteinExistence type="evidence at transcript level"/>
<comment type="function">
    <text>Core component of nucleosome. Nucleosomes wrap and compact DNA into chromatin, limiting DNA accessibility to the cellular machineries which require DNA as a template. Histones thereby play a central role in transcription regulation, DNA repair, DNA replication and chromosomal stability. DNA accessibility is regulated via a complex set of post-translational modifications of histones, also called histone code, and nucleosome remodeling.</text>
</comment>
<comment type="subunit">
    <text>The nucleosome is a histone octamer containing two molecules each of H2A, H2B, H3 and H4 assembled in one H3-H4 heterotetramer and two H2A-H2B heterodimers. The octamer wraps approximately 147 bp of DNA.</text>
</comment>
<comment type="subcellular location">
    <subcellularLocation>
        <location>Nucleus</location>
    </subcellularLocation>
    <subcellularLocation>
        <location>Chromosome</location>
    </subcellularLocation>
</comment>
<comment type="developmental stage">
    <text>The different late H2A and H2B mRNAs are present in as few as 200 copies in the egg and each accumulate to 3-5 x 100000 molecules in the gastrula embryo.</text>
</comment>
<comment type="PTM">
    <text evidence="1">Monoubiquitination of Lys-119 gives a specific tag for epigenetic transcriptional repression.</text>
</comment>
<comment type="PTM">
    <text evidence="1">Phosphorylation of Ser-2 directly represses transcription.</text>
</comment>
<comment type="similarity">
    <text evidence="3">Belongs to the histone H2A family.</text>
</comment>
<name>H2A1_PSAMI</name>
<protein>
    <recommendedName>
        <fullName>Late histone H2A.1</fullName>
    </recommendedName>
</protein>
<evidence type="ECO:0000250" key="1"/>
<evidence type="ECO:0000256" key="2">
    <source>
        <dbReference type="SAM" id="MobiDB-lite"/>
    </source>
</evidence>
<evidence type="ECO:0000305" key="3"/>
<reference key="1">
    <citation type="journal article" date="1985" name="Proc. Natl. Acad. Sci. U.S.A.">
        <title>Synthesis of sperm and late histone cDNAs of the sea urchin with a primer complementary to the conserved 3' terminal palindrome: evidence for tissue-specific and more general histone gene variants.</title>
        <authorList>
            <person name="Busslinger M."/>
            <person name="Barberis A."/>
        </authorList>
    </citation>
    <scope>NUCLEOTIDE SEQUENCE [MRNA]</scope>
</reference>
<organism>
    <name type="scientific">Psammechinus miliaris</name>
    <name type="common">Green sea urchin</name>
    <name type="synonym">Echinus miliaris</name>
    <dbReference type="NCBI Taxonomy" id="7660"/>
    <lineage>
        <taxon>Eukaryota</taxon>
        <taxon>Metazoa</taxon>
        <taxon>Echinodermata</taxon>
        <taxon>Eleutherozoa</taxon>
        <taxon>Echinozoa</taxon>
        <taxon>Echinoidea</taxon>
        <taxon>Euechinoidea</taxon>
        <taxon>Echinacea</taxon>
        <taxon>Camarodonta</taxon>
        <taxon>Echinidea</taxon>
        <taxon>Parechinidae</taxon>
        <taxon>Psammechinus</taxon>
    </lineage>
</organism>
<keyword id="KW-0007">Acetylation</keyword>
<keyword id="KW-0158">Chromosome</keyword>
<keyword id="KW-0238">DNA-binding</keyword>
<keyword id="KW-1017">Isopeptide bond</keyword>
<keyword id="KW-0488">Methylation</keyword>
<keyword id="KW-0544">Nucleosome core</keyword>
<keyword id="KW-0539">Nucleus</keyword>
<keyword id="KW-0597">Phosphoprotein</keyword>
<keyword id="KW-0832">Ubl conjugation</keyword>
<accession>P04735</accession>
<feature type="initiator methionine" description="Removed" evidence="1">
    <location>
        <position position="1"/>
    </location>
</feature>
<feature type="chain" id="PRO_0000055270" description="Late histone H2A.1">
    <location>
        <begin position="2"/>
        <end position="125"/>
    </location>
</feature>
<feature type="region of interest" description="Disordered" evidence="2">
    <location>
        <begin position="1"/>
        <end position="21"/>
    </location>
</feature>
<feature type="compositionally biased region" description="Basic residues" evidence="2">
    <location>
        <begin position="1"/>
        <end position="18"/>
    </location>
</feature>
<feature type="modified residue" description="N-acetylserine" evidence="1">
    <location>
        <position position="2"/>
    </location>
</feature>
<feature type="modified residue" description="Phosphoserine" evidence="1">
    <location>
        <position position="2"/>
    </location>
</feature>
<feature type="modified residue" description="N5-methylglutamine" evidence="1">
    <location>
        <position position="104"/>
    </location>
</feature>
<feature type="cross-link" description="Glycyl lysine isopeptide (Lys-Gly) (interchain with G-Cter in ubiquitin)" evidence="1">
    <location>
        <position position="119"/>
    </location>
</feature>